<name>SEH1B_XENLA</name>
<feature type="chain" id="PRO_0000373809" description="Nucleoporin SEH1-B">
    <location>
        <begin position="1"/>
        <end position="360"/>
    </location>
</feature>
<feature type="repeat" description="WD 1">
    <location>
        <begin position="10"/>
        <end position="49"/>
    </location>
</feature>
<feature type="repeat" description="WD 2">
    <location>
        <begin position="55"/>
        <end position="96"/>
    </location>
</feature>
<feature type="repeat" description="WD 3">
    <location>
        <begin position="111"/>
        <end position="152"/>
    </location>
</feature>
<feature type="repeat" description="WD 4">
    <location>
        <begin position="160"/>
        <end position="210"/>
    </location>
</feature>
<feature type="repeat" description="WD 5">
    <location>
        <begin position="217"/>
        <end position="258"/>
    </location>
</feature>
<feature type="repeat" description="WD 6">
    <location>
        <begin position="276"/>
        <end position="315"/>
    </location>
</feature>
<proteinExistence type="evidence at protein level"/>
<gene>
    <name type="primary">seh1l-b</name>
</gene>
<organism>
    <name type="scientific">Xenopus laevis</name>
    <name type="common">African clawed frog</name>
    <dbReference type="NCBI Taxonomy" id="8355"/>
    <lineage>
        <taxon>Eukaryota</taxon>
        <taxon>Metazoa</taxon>
        <taxon>Chordata</taxon>
        <taxon>Craniata</taxon>
        <taxon>Vertebrata</taxon>
        <taxon>Euteleostomi</taxon>
        <taxon>Amphibia</taxon>
        <taxon>Batrachia</taxon>
        <taxon>Anura</taxon>
        <taxon>Pipoidea</taxon>
        <taxon>Pipidae</taxon>
        <taxon>Xenopodinae</taxon>
        <taxon>Xenopus</taxon>
        <taxon>Xenopus</taxon>
    </lineage>
</organism>
<keyword id="KW-0002">3D-structure</keyword>
<keyword id="KW-0131">Cell cycle</keyword>
<keyword id="KW-0132">Cell division</keyword>
<keyword id="KW-0137">Centromere</keyword>
<keyword id="KW-0158">Chromosome</keyword>
<keyword id="KW-0159">Chromosome partition</keyword>
<keyword id="KW-0995">Kinetochore</keyword>
<keyword id="KW-0458">Lysosome</keyword>
<keyword id="KW-0472">Membrane</keyword>
<keyword id="KW-0498">Mitosis</keyword>
<keyword id="KW-0509">mRNA transport</keyword>
<keyword id="KW-0906">Nuclear pore complex</keyword>
<keyword id="KW-0539">Nucleus</keyword>
<keyword id="KW-0653">Protein transport</keyword>
<keyword id="KW-1185">Reference proteome</keyword>
<keyword id="KW-0677">Repeat</keyword>
<keyword id="KW-0811">Translocation</keyword>
<keyword id="KW-0813">Transport</keyword>
<keyword id="KW-0853">WD repeat</keyword>
<evidence type="ECO:0000250" key="1">
    <source>
        <dbReference type="UniProtKB" id="Q96EE3"/>
    </source>
</evidence>
<evidence type="ECO:0000305" key="2"/>
<protein>
    <recommendedName>
        <fullName evidence="2">Nucleoporin SEH1-B</fullName>
    </recommendedName>
    <alternativeName>
        <fullName evidence="2">GATOR2 complex protein SEH1-B</fullName>
    </alternativeName>
    <alternativeName>
        <fullName>Nup107-160 subcomplex subunit seh1-B</fullName>
    </alternativeName>
</protein>
<accession>Q6GNF1</accession>
<dbReference type="EMBL" id="BC073561">
    <property type="protein sequence ID" value="AAH73561.1"/>
    <property type="molecule type" value="mRNA"/>
</dbReference>
<dbReference type="RefSeq" id="NP_001085936.1">
    <property type="nucleotide sequence ID" value="NM_001092467.1"/>
</dbReference>
<dbReference type="PDB" id="7FIK">
    <property type="method" value="EM"/>
    <property type="resolution" value="3.70 A"/>
    <property type="chains" value="D/d=1-360"/>
</dbReference>
<dbReference type="PDB" id="7WB4">
    <property type="method" value="EM"/>
    <property type="resolution" value="5.60 A"/>
    <property type="chains" value="D/d=1-360"/>
</dbReference>
<dbReference type="PDBsum" id="7FIK"/>
<dbReference type="PDBsum" id="7WB4"/>
<dbReference type="EMDB" id="EMD-31600"/>
<dbReference type="EMDB" id="EMD-32394"/>
<dbReference type="SMR" id="Q6GNF1"/>
<dbReference type="DNASU" id="444365"/>
<dbReference type="GeneID" id="444365"/>
<dbReference type="KEGG" id="xla:444365"/>
<dbReference type="AGR" id="Xenbase:XB-GENE-17330961"/>
<dbReference type="CTD" id="444365"/>
<dbReference type="Xenbase" id="XB-GENE-17330961">
    <property type="gene designation" value="seh1l.S"/>
</dbReference>
<dbReference type="OrthoDB" id="364224at2759"/>
<dbReference type="Proteomes" id="UP000186698">
    <property type="component" value="Chromosome 6S"/>
</dbReference>
<dbReference type="Bgee" id="444365">
    <property type="expression patterns" value="Expressed in neurula embryo and 19 other cell types or tissues"/>
</dbReference>
<dbReference type="GO" id="GO:0061700">
    <property type="term" value="C:GATOR2 complex"/>
    <property type="evidence" value="ECO:0000250"/>
    <property type="project" value="UniProtKB"/>
</dbReference>
<dbReference type="GO" id="GO:0000776">
    <property type="term" value="C:kinetochore"/>
    <property type="evidence" value="ECO:0007669"/>
    <property type="project" value="UniProtKB-KW"/>
</dbReference>
<dbReference type="GO" id="GO:0005765">
    <property type="term" value="C:lysosomal membrane"/>
    <property type="evidence" value="ECO:0000250"/>
    <property type="project" value="UniProtKB"/>
</dbReference>
<dbReference type="GO" id="GO:0031080">
    <property type="term" value="C:nuclear pore outer ring"/>
    <property type="evidence" value="ECO:0000250"/>
    <property type="project" value="UniProtKB"/>
</dbReference>
<dbReference type="GO" id="GO:0035859">
    <property type="term" value="C:Seh1-associated complex"/>
    <property type="evidence" value="ECO:0000318"/>
    <property type="project" value="GO_Central"/>
</dbReference>
<dbReference type="GO" id="GO:0005198">
    <property type="term" value="F:structural molecule activity"/>
    <property type="evidence" value="ECO:0007669"/>
    <property type="project" value="InterPro"/>
</dbReference>
<dbReference type="GO" id="GO:0051315">
    <property type="term" value="P:attachment of mitotic spindle microtubules to kinetochore"/>
    <property type="evidence" value="ECO:0000250"/>
    <property type="project" value="UniProtKB"/>
</dbReference>
<dbReference type="GO" id="GO:0051301">
    <property type="term" value="P:cell division"/>
    <property type="evidence" value="ECO:0007669"/>
    <property type="project" value="UniProtKB-KW"/>
</dbReference>
<dbReference type="GO" id="GO:0034198">
    <property type="term" value="P:cellular response to amino acid starvation"/>
    <property type="evidence" value="ECO:0000318"/>
    <property type="project" value="GO_Central"/>
</dbReference>
<dbReference type="GO" id="GO:0031669">
    <property type="term" value="P:cellular response to nutrient levels"/>
    <property type="evidence" value="ECO:0000250"/>
    <property type="project" value="UniProtKB"/>
</dbReference>
<dbReference type="GO" id="GO:0007080">
    <property type="term" value="P:mitotic metaphase chromosome alignment"/>
    <property type="evidence" value="ECO:0000250"/>
    <property type="project" value="UniProtKB"/>
</dbReference>
<dbReference type="GO" id="GO:0051028">
    <property type="term" value="P:mRNA transport"/>
    <property type="evidence" value="ECO:0007669"/>
    <property type="project" value="UniProtKB-KW"/>
</dbReference>
<dbReference type="GO" id="GO:0006999">
    <property type="term" value="P:nuclear pore organization"/>
    <property type="evidence" value="ECO:0000250"/>
    <property type="project" value="UniProtKB"/>
</dbReference>
<dbReference type="GO" id="GO:1904263">
    <property type="term" value="P:positive regulation of TORC1 signaling"/>
    <property type="evidence" value="ECO:0000250"/>
    <property type="project" value="UniProtKB"/>
</dbReference>
<dbReference type="GO" id="GO:0015031">
    <property type="term" value="P:protein transport"/>
    <property type="evidence" value="ECO:0007669"/>
    <property type="project" value="UniProtKB-KW"/>
</dbReference>
<dbReference type="FunFam" id="2.130.10.10:FF:000063">
    <property type="entry name" value="SEH1 like nucleoporin"/>
    <property type="match status" value="1"/>
</dbReference>
<dbReference type="Gene3D" id="2.130.10.10">
    <property type="entry name" value="YVTN repeat-like/Quinoprotein amine dehydrogenase"/>
    <property type="match status" value="1"/>
</dbReference>
<dbReference type="InterPro" id="IPR020472">
    <property type="entry name" value="G-protein_beta_WD-40_rep"/>
</dbReference>
<dbReference type="InterPro" id="IPR037363">
    <property type="entry name" value="Sec13/Seh1_fam"/>
</dbReference>
<dbReference type="InterPro" id="IPR015943">
    <property type="entry name" value="WD40/YVTN_repeat-like_dom_sf"/>
</dbReference>
<dbReference type="InterPro" id="IPR036322">
    <property type="entry name" value="WD40_repeat_dom_sf"/>
</dbReference>
<dbReference type="InterPro" id="IPR001680">
    <property type="entry name" value="WD40_rpt"/>
</dbReference>
<dbReference type="PANTHER" id="PTHR11024">
    <property type="entry name" value="NUCLEAR PORE COMPLEX PROTEIN SEC13 / SEH1 FAMILY MEMBER"/>
    <property type="match status" value="1"/>
</dbReference>
<dbReference type="PANTHER" id="PTHR11024:SF3">
    <property type="entry name" value="NUCLEOPORIN SEH1"/>
    <property type="match status" value="1"/>
</dbReference>
<dbReference type="Pfam" id="PF00400">
    <property type="entry name" value="WD40"/>
    <property type="match status" value="4"/>
</dbReference>
<dbReference type="PRINTS" id="PR00320">
    <property type="entry name" value="GPROTEINBRPT"/>
</dbReference>
<dbReference type="SMART" id="SM00320">
    <property type="entry name" value="WD40"/>
    <property type="match status" value="5"/>
</dbReference>
<dbReference type="SUPFAM" id="SSF50978">
    <property type="entry name" value="WD40 repeat-like"/>
    <property type="match status" value="1"/>
</dbReference>
<dbReference type="PROSITE" id="PS50082">
    <property type="entry name" value="WD_REPEATS_2"/>
    <property type="match status" value="2"/>
</dbReference>
<dbReference type="PROSITE" id="PS50294">
    <property type="entry name" value="WD_REPEATS_REGION"/>
    <property type="match status" value="2"/>
</dbReference>
<sequence length="360" mass="39746">MFVARSIAADHKDLIHDVSFDFHGRRMATCSSDQSVKVWDKSENVNWHCTASWKTHSGSVWRVTWAHPEFGQVLASCSFDRTAAVWEEIVGESNDKLRGQSHWVKRTTLVDSRTSVTDVKFAPKHMGLMLATCSADGVVRIYEAPDVMNLSQWSLQHEISCKLSCSCISWNPSSSRAHSPMIAVGSDDSSPNIMGKVQIYEYNENTRKYAKAETLMSVSDPVHDIAFAPNLGRSFHILAVATKDVRIFTMKPLRKELSSSGGVTKFENHTVAQFDNHNSQVWRVSWNITGTVLASSGDDGTVRLWKANYMDNWKCIGVLKGDGNPVGNSFQGIFGSSIGSASHGLQNSVNGTSTSGRKHS</sequence>
<comment type="function">
    <text evidence="1">Component of the Nup107-160 subcomplex of the nuclear pore complex (NPC). The Nup107-160 subcomplex is required for the assembly of a functional NPC. The Nup107-160 subcomplex is also required for normal kinetochore microtubule attachment, mitotic progression and chromosome segregation. This subunit plays a role in recruitment of the Nup107-160 subcomplex to the kinetochore.</text>
</comment>
<comment type="function">
    <text evidence="1">As a component of the GATOR2 complex, functions as an activator of the amino acid-sensing branch of the mTORC1 signaling pathway. The GATOR2 complex indirectly activates mTORC1 through the inhibition of the GATOR1 subcomplex. GATOR2 probably acts as an E3 ubiquitin-protein ligase toward GATOR1. In the presence of abundant amino acids, the GATOR2 complex mediates ubiquitination of the NPRL2 core component of the GATOR1 complex, leading to GATOR1 inactivation. In the absence of amino acids, GATOR2 is inhibited, activating the GATOR1 complex.</text>
</comment>
<comment type="activity regulation">
    <text evidence="1">The GATOR2 complex is negatively regulated by the upstream amino acid sensors CASTOR1 and SESN2, which sequester the GATOR2 complex in absence of amino acids. In the presence of abundant amino acids, GATOR2 is released from CASTOR1 and SESN2 and activated.</text>
</comment>
<comment type="subunit">
    <text evidence="1">Component of the Nup107-160 subcomplex of the nuclear pore complex (NPC). The Nup107-160 subcomplex includes NUP160, NUP133, NUP107, NUP98, NUP85, NUP43, NUP37, SEH1 and SEC13. Component of the GATOR2 subcomplex, composed of MIOS, SEC13, SEH1L, WDR24 and WDR59. The GATOR2 complex interacts with CASTOR1 and CASTOR2; the interaction is negatively regulated by arginine. The GATOR2 complex interacts with SESN1, SESN2 and SESN3; the interaction is negatively regulated by amino acids.</text>
</comment>
<comment type="subcellular location">
    <subcellularLocation>
        <location evidence="1">Chromosome</location>
        <location evidence="1">Centromere</location>
        <location evidence="1">Kinetochore</location>
    </subcellularLocation>
    <subcellularLocation>
        <location evidence="1">Nucleus</location>
        <location evidence="1">Nuclear pore complex</location>
    </subcellularLocation>
    <subcellularLocation>
        <location evidence="1">Lysosome membrane</location>
    </subcellularLocation>
</comment>
<comment type="similarity">
    <text evidence="2">Belongs to the WD repeat SEC13 family.</text>
</comment>
<reference key="1">
    <citation type="submission" date="2004-06" db="EMBL/GenBank/DDBJ databases">
        <authorList>
            <consortium name="NIH - Xenopus Gene Collection (XGC) project"/>
        </authorList>
    </citation>
    <scope>NUCLEOTIDE SEQUENCE [LARGE SCALE MRNA]</scope>
    <source>
        <tissue>Spleen</tissue>
    </source>
</reference>